<keyword id="KW-0067">ATP-binding</keyword>
<keyword id="KW-0963">Cytoplasm</keyword>
<keyword id="KW-0520">NAD</keyword>
<keyword id="KW-0547">Nucleotide-binding</keyword>
<keyword id="KW-0548">Nucleotidyltransferase</keyword>
<keyword id="KW-0662">Pyridine nucleotide biosynthesis</keyword>
<keyword id="KW-0808">Transferase</keyword>
<dbReference type="EC" id="2.7.7.1" evidence="1"/>
<dbReference type="EMBL" id="CP000867">
    <property type="protein sequence ID" value="ABX01906.1"/>
    <property type="molecule type" value="Genomic_DNA"/>
</dbReference>
<dbReference type="SMR" id="A9A983"/>
<dbReference type="STRING" id="444158.MmarC6_1092"/>
<dbReference type="KEGG" id="mmx:MmarC6_1092"/>
<dbReference type="eggNOG" id="arCOG00972">
    <property type="taxonomic scope" value="Archaea"/>
</dbReference>
<dbReference type="HOGENOM" id="CLU_108783_0_0_2"/>
<dbReference type="OrthoDB" id="264480at2157"/>
<dbReference type="PhylomeDB" id="A9A983"/>
<dbReference type="UniPathway" id="UPA00253">
    <property type="reaction ID" value="UER00600"/>
</dbReference>
<dbReference type="GO" id="GO:0005737">
    <property type="term" value="C:cytoplasm"/>
    <property type="evidence" value="ECO:0007669"/>
    <property type="project" value="UniProtKB-SubCell"/>
</dbReference>
<dbReference type="GO" id="GO:0005524">
    <property type="term" value="F:ATP binding"/>
    <property type="evidence" value="ECO:0007669"/>
    <property type="project" value="UniProtKB-KW"/>
</dbReference>
<dbReference type="GO" id="GO:0000309">
    <property type="term" value="F:nicotinamide-nucleotide adenylyltransferase activity"/>
    <property type="evidence" value="ECO:0007669"/>
    <property type="project" value="UniProtKB-UniRule"/>
</dbReference>
<dbReference type="GO" id="GO:0009435">
    <property type="term" value="P:NAD biosynthetic process"/>
    <property type="evidence" value="ECO:0007669"/>
    <property type="project" value="UniProtKB-UniRule"/>
</dbReference>
<dbReference type="CDD" id="cd02166">
    <property type="entry name" value="NMNAT_Archaea"/>
    <property type="match status" value="1"/>
</dbReference>
<dbReference type="Gene3D" id="3.40.50.620">
    <property type="entry name" value="HUPs"/>
    <property type="match status" value="1"/>
</dbReference>
<dbReference type="HAMAP" id="MF_00243">
    <property type="entry name" value="NMN_adenylyltr"/>
    <property type="match status" value="1"/>
</dbReference>
<dbReference type="InterPro" id="IPR004821">
    <property type="entry name" value="Cyt_trans-like"/>
</dbReference>
<dbReference type="InterPro" id="IPR006418">
    <property type="entry name" value="NMN_Atrans_arc"/>
</dbReference>
<dbReference type="InterPro" id="IPR014729">
    <property type="entry name" value="Rossmann-like_a/b/a_fold"/>
</dbReference>
<dbReference type="NCBIfam" id="TIGR01527">
    <property type="entry name" value="arch_NMN_Atrans"/>
    <property type="match status" value="1"/>
</dbReference>
<dbReference type="NCBIfam" id="TIGR00125">
    <property type="entry name" value="cyt_tran_rel"/>
    <property type="match status" value="1"/>
</dbReference>
<dbReference type="NCBIfam" id="NF002243">
    <property type="entry name" value="PRK01153.1"/>
    <property type="match status" value="1"/>
</dbReference>
<dbReference type="PANTHER" id="PTHR21342:SF0">
    <property type="entry name" value="BIFUNCTIONAL NMN ADENYLYLTRANSFERASE_NUDIX HYDROLASE"/>
    <property type="match status" value="1"/>
</dbReference>
<dbReference type="PANTHER" id="PTHR21342">
    <property type="entry name" value="PHOSPHOPANTETHEINE ADENYLYLTRANSFERASE"/>
    <property type="match status" value="1"/>
</dbReference>
<dbReference type="Pfam" id="PF01467">
    <property type="entry name" value="CTP_transf_like"/>
    <property type="match status" value="1"/>
</dbReference>
<dbReference type="SUPFAM" id="SSF52374">
    <property type="entry name" value="Nucleotidylyl transferase"/>
    <property type="match status" value="1"/>
</dbReference>
<feature type="chain" id="PRO_1000100756" description="Nicotinamide-nucleotide adenylyltransferase">
    <location>
        <begin position="1"/>
        <end position="171"/>
    </location>
</feature>
<name>NADM_METM6</name>
<accession>A9A983</accession>
<sequence length="171" mass="19982">MRAFLIGRWQPFHKGHLEIIKKISKEVDEIIIGIGSCQKSHTLTDPFTAGERMMMITKTLENYDINYYAIPINDIDYNAVWVSCVESLTPPFTTIYTGNSLVRELFSEKNYNVKKPELYNRTDYSGTKIRKKMLDGSNWEHLVPEEVVKVIEEIDGINRIRRLSEKDYDEE</sequence>
<gene>
    <name type="ordered locus">MmarC6_1092</name>
</gene>
<comment type="catalytic activity">
    <reaction evidence="1">
        <text>beta-nicotinamide D-ribonucleotide + ATP + H(+) = diphosphate + NAD(+)</text>
        <dbReference type="Rhea" id="RHEA:21360"/>
        <dbReference type="ChEBI" id="CHEBI:14649"/>
        <dbReference type="ChEBI" id="CHEBI:15378"/>
        <dbReference type="ChEBI" id="CHEBI:30616"/>
        <dbReference type="ChEBI" id="CHEBI:33019"/>
        <dbReference type="ChEBI" id="CHEBI:57540"/>
        <dbReference type="EC" id="2.7.7.1"/>
    </reaction>
</comment>
<comment type="pathway">
    <text evidence="1">Cofactor biosynthesis; NAD(+) biosynthesis; NAD(+) from nicotinamide D-ribonucleotide: step 1/1.</text>
</comment>
<comment type="subcellular location">
    <subcellularLocation>
        <location evidence="1">Cytoplasm</location>
    </subcellularLocation>
</comment>
<comment type="similarity">
    <text evidence="1">Belongs to the archaeal NMN adenylyltransferase family.</text>
</comment>
<reference key="1">
    <citation type="submission" date="2007-10" db="EMBL/GenBank/DDBJ databases">
        <title>Complete sequence of Methanococcus maripaludis C6.</title>
        <authorList>
            <consortium name="US DOE Joint Genome Institute"/>
            <person name="Copeland A."/>
            <person name="Lucas S."/>
            <person name="Lapidus A."/>
            <person name="Barry K."/>
            <person name="Glavina del Rio T."/>
            <person name="Dalin E."/>
            <person name="Tice H."/>
            <person name="Pitluck S."/>
            <person name="Clum A."/>
            <person name="Schmutz J."/>
            <person name="Larimer F."/>
            <person name="Land M."/>
            <person name="Hauser L."/>
            <person name="Kyrpides N."/>
            <person name="Mikhailova N."/>
            <person name="Sieprawska-Lupa M."/>
            <person name="Whitman W.B."/>
            <person name="Richardson P."/>
        </authorList>
    </citation>
    <scope>NUCLEOTIDE SEQUENCE [LARGE SCALE GENOMIC DNA]</scope>
    <source>
        <strain>C6 / ATCC BAA-1332</strain>
    </source>
</reference>
<organism>
    <name type="scientific">Methanococcus maripaludis (strain C6 / ATCC BAA-1332)</name>
    <dbReference type="NCBI Taxonomy" id="444158"/>
    <lineage>
        <taxon>Archaea</taxon>
        <taxon>Methanobacteriati</taxon>
        <taxon>Methanobacteriota</taxon>
        <taxon>Methanomada group</taxon>
        <taxon>Methanococci</taxon>
        <taxon>Methanococcales</taxon>
        <taxon>Methanococcaceae</taxon>
        <taxon>Methanococcus</taxon>
    </lineage>
</organism>
<evidence type="ECO:0000255" key="1">
    <source>
        <dbReference type="HAMAP-Rule" id="MF_00243"/>
    </source>
</evidence>
<proteinExistence type="inferred from homology"/>
<protein>
    <recommendedName>
        <fullName evidence="1">Nicotinamide-nucleotide adenylyltransferase</fullName>
        <ecNumber evidence="1">2.7.7.1</ecNumber>
    </recommendedName>
    <alternativeName>
        <fullName evidence="1">NAD(+) diphosphorylase</fullName>
    </alternativeName>
    <alternativeName>
        <fullName evidence="1">NAD(+) pyrophosphorylase</fullName>
    </alternativeName>
    <alternativeName>
        <fullName evidence="1">NMN adenylyltransferase</fullName>
    </alternativeName>
</protein>